<accession>A2RGY2</accession>
<comment type="similarity">
    <text evidence="1">Belongs to the bacterial ribosomal protein bL32 family.</text>
</comment>
<proteinExistence type="inferred from homology"/>
<name>RL32_STRPG</name>
<organism>
    <name type="scientific">Streptococcus pyogenes serotype M5 (strain Manfredo)</name>
    <dbReference type="NCBI Taxonomy" id="160491"/>
    <lineage>
        <taxon>Bacteria</taxon>
        <taxon>Bacillati</taxon>
        <taxon>Bacillota</taxon>
        <taxon>Bacilli</taxon>
        <taxon>Lactobacillales</taxon>
        <taxon>Streptococcaceae</taxon>
        <taxon>Streptococcus</taxon>
    </lineage>
</organism>
<sequence length="60" mass="6865">MAVPARHTSKAKKNKRRTHYKLTAPSVQFDETTGDYSRSHRVSLKGYYKGRKIAKANEAK</sequence>
<dbReference type="EMBL" id="AM295007">
    <property type="protein sequence ID" value="CAM31114.1"/>
    <property type="molecule type" value="Genomic_DNA"/>
</dbReference>
<dbReference type="RefSeq" id="WP_000290414.1">
    <property type="nucleotide sequence ID" value="NC_009332.1"/>
</dbReference>
<dbReference type="SMR" id="A2RGY2"/>
<dbReference type="GeneID" id="83689722"/>
<dbReference type="KEGG" id="spf:SpyM51790"/>
<dbReference type="HOGENOM" id="CLU_129084_2_3_9"/>
<dbReference type="GO" id="GO:0015934">
    <property type="term" value="C:large ribosomal subunit"/>
    <property type="evidence" value="ECO:0007669"/>
    <property type="project" value="InterPro"/>
</dbReference>
<dbReference type="GO" id="GO:0003735">
    <property type="term" value="F:structural constituent of ribosome"/>
    <property type="evidence" value="ECO:0007669"/>
    <property type="project" value="InterPro"/>
</dbReference>
<dbReference type="GO" id="GO:0006412">
    <property type="term" value="P:translation"/>
    <property type="evidence" value="ECO:0007669"/>
    <property type="project" value="UniProtKB-UniRule"/>
</dbReference>
<dbReference type="HAMAP" id="MF_00340">
    <property type="entry name" value="Ribosomal_bL32"/>
    <property type="match status" value="1"/>
</dbReference>
<dbReference type="InterPro" id="IPR002677">
    <property type="entry name" value="Ribosomal_bL32"/>
</dbReference>
<dbReference type="InterPro" id="IPR044957">
    <property type="entry name" value="Ribosomal_bL32_bact"/>
</dbReference>
<dbReference type="InterPro" id="IPR011332">
    <property type="entry name" value="Ribosomal_zn-bd"/>
</dbReference>
<dbReference type="NCBIfam" id="TIGR01031">
    <property type="entry name" value="rpmF_bact"/>
    <property type="match status" value="1"/>
</dbReference>
<dbReference type="PANTHER" id="PTHR35534">
    <property type="entry name" value="50S RIBOSOMAL PROTEIN L32"/>
    <property type="match status" value="1"/>
</dbReference>
<dbReference type="PANTHER" id="PTHR35534:SF1">
    <property type="entry name" value="LARGE RIBOSOMAL SUBUNIT PROTEIN BL32"/>
    <property type="match status" value="1"/>
</dbReference>
<dbReference type="Pfam" id="PF01783">
    <property type="entry name" value="Ribosomal_L32p"/>
    <property type="match status" value="1"/>
</dbReference>
<dbReference type="SUPFAM" id="SSF57829">
    <property type="entry name" value="Zn-binding ribosomal proteins"/>
    <property type="match status" value="1"/>
</dbReference>
<evidence type="ECO:0000255" key="1">
    <source>
        <dbReference type="HAMAP-Rule" id="MF_00340"/>
    </source>
</evidence>
<evidence type="ECO:0000256" key="2">
    <source>
        <dbReference type="SAM" id="MobiDB-lite"/>
    </source>
</evidence>
<evidence type="ECO:0000305" key="3"/>
<reference key="1">
    <citation type="journal article" date="2007" name="J. Bacteriol.">
        <title>Complete genome of acute rheumatic fever-associated serotype M5 Streptococcus pyogenes strain Manfredo.</title>
        <authorList>
            <person name="Holden M.T.G."/>
            <person name="Scott A."/>
            <person name="Cherevach I."/>
            <person name="Chillingworth T."/>
            <person name="Churcher C."/>
            <person name="Cronin A."/>
            <person name="Dowd L."/>
            <person name="Feltwell T."/>
            <person name="Hamlin N."/>
            <person name="Holroyd S."/>
            <person name="Jagels K."/>
            <person name="Moule S."/>
            <person name="Mungall K."/>
            <person name="Quail M.A."/>
            <person name="Price C."/>
            <person name="Rabbinowitsch E."/>
            <person name="Sharp S."/>
            <person name="Skelton J."/>
            <person name="Whitehead S."/>
            <person name="Barrell B.G."/>
            <person name="Kehoe M."/>
            <person name="Parkhill J."/>
        </authorList>
    </citation>
    <scope>NUCLEOTIDE SEQUENCE [LARGE SCALE GENOMIC DNA]</scope>
    <source>
        <strain>Manfredo</strain>
    </source>
</reference>
<gene>
    <name evidence="1" type="primary">rpmF</name>
    <name type="ordered locus">SpyM51790</name>
</gene>
<protein>
    <recommendedName>
        <fullName evidence="1">Large ribosomal subunit protein bL32</fullName>
    </recommendedName>
    <alternativeName>
        <fullName evidence="3">50S ribosomal protein L32</fullName>
    </alternativeName>
</protein>
<keyword id="KW-0687">Ribonucleoprotein</keyword>
<keyword id="KW-0689">Ribosomal protein</keyword>
<feature type="chain" id="PRO_0000296578" description="Large ribosomal subunit protein bL32">
    <location>
        <begin position="1"/>
        <end position="60"/>
    </location>
</feature>
<feature type="region of interest" description="Disordered" evidence="2">
    <location>
        <begin position="1"/>
        <end position="22"/>
    </location>
</feature>
<feature type="compositionally biased region" description="Basic residues" evidence="2">
    <location>
        <begin position="7"/>
        <end position="20"/>
    </location>
</feature>